<organism>
    <name type="scientific">Staphylococcus aureus (strain N315)</name>
    <dbReference type="NCBI Taxonomy" id="158879"/>
    <lineage>
        <taxon>Bacteria</taxon>
        <taxon>Bacillati</taxon>
        <taxon>Bacillota</taxon>
        <taxon>Bacilli</taxon>
        <taxon>Bacillales</taxon>
        <taxon>Staphylococcaceae</taxon>
        <taxon>Staphylococcus</taxon>
    </lineage>
</organism>
<sequence>MYSIKMRSSNQDVHISGAETICEFDKIEQTVQRFYNKGFFHENGQPDFLNIKIQKIMEPIQQIKALQIIEDDKANLQHLTQECGVTEQALNQGMTYIKNETVYTGAIILSAISGKRLDSFGQRGIRATHFSFEDINNKGDLNERVTDALAIASCINAHPYVKGELCVSDDLTYTTGYFAAAKIGYHRLFDIKPVNTRYGGRIIFVDDCIDLNHYISFLESTPKQVVYETV</sequence>
<name>BIOW_STAAN</name>
<gene>
    <name evidence="1" type="primary">bioW</name>
    <name type="ordered locus">SA2211</name>
</gene>
<dbReference type="EC" id="6.2.1.14" evidence="1"/>
<dbReference type="EMBL" id="BA000018">
    <property type="protein sequence ID" value="BAB43513.1"/>
    <property type="molecule type" value="Genomic_DNA"/>
</dbReference>
<dbReference type="PIR" id="H90043">
    <property type="entry name" value="H90043"/>
</dbReference>
<dbReference type="RefSeq" id="WP_000286875.1">
    <property type="nucleotide sequence ID" value="NC_002745.2"/>
</dbReference>
<dbReference type="SMR" id="P67550"/>
<dbReference type="EnsemblBacteria" id="BAB43513">
    <property type="protein sequence ID" value="BAB43513"/>
    <property type="gene ID" value="BAB43513"/>
</dbReference>
<dbReference type="KEGG" id="sau:SA2211"/>
<dbReference type="HOGENOM" id="CLU_076858_0_0_9"/>
<dbReference type="UniPathway" id="UPA00999">
    <property type="reaction ID" value="UER00351"/>
</dbReference>
<dbReference type="GO" id="GO:0042410">
    <property type="term" value="F:6-carboxyhexanoate-CoA ligase activity"/>
    <property type="evidence" value="ECO:0007669"/>
    <property type="project" value="UniProtKB-UniRule"/>
</dbReference>
<dbReference type="GO" id="GO:0005524">
    <property type="term" value="F:ATP binding"/>
    <property type="evidence" value="ECO:0007669"/>
    <property type="project" value="UniProtKB-KW"/>
</dbReference>
<dbReference type="GO" id="GO:0000287">
    <property type="term" value="F:magnesium ion binding"/>
    <property type="evidence" value="ECO:0007669"/>
    <property type="project" value="UniProtKB-UniRule"/>
</dbReference>
<dbReference type="GO" id="GO:0009102">
    <property type="term" value="P:biotin biosynthetic process"/>
    <property type="evidence" value="ECO:0007669"/>
    <property type="project" value="UniProtKB-UniRule"/>
</dbReference>
<dbReference type="HAMAP" id="MF_00668">
    <property type="entry name" value="BioW"/>
    <property type="match status" value="1"/>
</dbReference>
<dbReference type="InterPro" id="IPR005499">
    <property type="entry name" value="BioW"/>
</dbReference>
<dbReference type="NCBIfam" id="NF002360">
    <property type="entry name" value="PRK01322.1"/>
    <property type="match status" value="1"/>
</dbReference>
<dbReference type="Pfam" id="PF03744">
    <property type="entry name" value="BioW"/>
    <property type="match status" value="1"/>
</dbReference>
<feature type="chain" id="PRO_0000191019" description="6-carboxyhexanoate--CoA ligase">
    <location>
        <begin position="1"/>
        <end position="230"/>
    </location>
</feature>
<comment type="function">
    <text evidence="1">Catalyzes the transformation of pimelate into pimeloyl-CoA with concomitant hydrolysis of ATP to AMP.</text>
</comment>
<comment type="catalytic activity">
    <reaction evidence="1">
        <text>heptanedioate + ATP + CoA = 6-carboxyhexanoyl-CoA + AMP + diphosphate</text>
        <dbReference type="Rhea" id="RHEA:14781"/>
        <dbReference type="ChEBI" id="CHEBI:30616"/>
        <dbReference type="ChEBI" id="CHEBI:33019"/>
        <dbReference type="ChEBI" id="CHEBI:36165"/>
        <dbReference type="ChEBI" id="CHEBI:57287"/>
        <dbReference type="ChEBI" id="CHEBI:57360"/>
        <dbReference type="ChEBI" id="CHEBI:456215"/>
        <dbReference type="EC" id="6.2.1.14"/>
    </reaction>
</comment>
<comment type="cofactor">
    <cofactor evidence="1">
        <name>Mg(2+)</name>
        <dbReference type="ChEBI" id="CHEBI:18420"/>
    </cofactor>
</comment>
<comment type="pathway">
    <text evidence="1">Metabolic intermediate metabolism; pimeloyl-CoA biosynthesis; pimeloyl-CoA from pimelate: step 1/1.</text>
</comment>
<comment type="subunit">
    <text evidence="1">Homodimer.</text>
</comment>
<comment type="similarity">
    <text evidence="1">Belongs to the BioW family.</text>
</comment>
<proteinExistence type="inferred from homology"/>
<protein>
    <recommendedName>
        <fullName evidence="1">6-carboxyhexanoate--CoA ligase</fullName>
        <ecNumber evidence="1">6.2.1.14</ecNumber>
    </recommendedName>
    <alternativeName>
        <fullName evidence="1">Pimeloyl-CoA synthase</fullName>
    </alternativeName>
</protein>
<keyword id="KW-0067">ATP-binding</keyword>
<keyword id="KW-0093">Biotin biosynthesis</keyword>
<keyword id="KW-0436">Ligase</keyword>
<keyword id="KW-0460">Magnesium</keyword>
<keyword id="KW-0547">Nucleotide-binding</keyword>
<accession>P67550</accession>
<accession>Q99RK9</accession>
<reference key="1">
    <citation type="journal article" date="2001" name="Lancet">
        <title>Whole genome sequencing of meticillin-resistant Staphylococcus aureus.</title>
        <authorList>
            <person name="Kuroda M."/>
            <person name="Ohta T."/>
            <person name="Uchiyama I."/>
            <person name="Baba T."/>
            <person name="Yuzawa H."/>
            <person name="Kobayashi I."/>
            <person name="Cui L."/>
            <person name="Oguchi A."/>
            <person name="Aoki K."/>
            <person name="Nagai Y."/>
            <person name="Lian J.-Q."/>
            <person name="Ito T."/>
            <person name="Kanamori M."/>
            <person name="Matsumaru H."/>
            <person name="Maruyama A."/>
            <person name="Murakami H."/>
            <person name="Hosoyama A."/>
            <person name="Mizutani-Ui Y."/>
            <person name="Takahashi N.K."/>
            <person name="Sawano T."/>
            <person name="Inoue R."/>
            <person name="Kaito C."/>
            <person name="Sekimizu K."/>
            <person name="Hirakawa H."/>
            <person name="Kuhara S."/>
            <person name="Goto S."/>
            <person name="Yabuzaki J."/>
            <person name="Kanehisa M."/>
            <person name="Yamashita A."/>
            <person name="Oshima K."/>
            <person name="Furuya K."/>
            <person name="Yoshino C."/>
            <person name="Shiba T."/>
            <person name="Hattori M."/>
            <person name="Ogasawara N."/>
            <person name="Hayashi H."/>
            <person name="Hiramatsu K."/>
        </authorList>
    </citation>
    <scope>NUCLEOTIDE SEQUENCE [LARGE SCALE GENOMIC DNA]</scope>
    <source>
        <strain>N315</strain>
    </source>
</reference>
<evidence type="ECO:0000255" key="1">
    <source>
        <dbReference type="HAMAP-Rule" id="MF_00668"/>
    </source>
</evidence>